<name>DUT_HAEI8</name>
<organism>
    <name type="scientific">Haemophilus influenzae (strain 86-028NP)</name>
    <dbReference type="NCBI Taxonomy" id="281310"/>
    <lineage>
        <taxon>Bacteria</taxon>
        <taxon>Pseudomonadati</taxon>
        <taxon>Pseudomonadota</taxon>
        <taxon>Gammaproteobacteria</taxon>
        <taxon>Pasteurellales</taxon>
        <taxon>Pasteurellaceae</taxon>
        <taxon>Haemophilus</taxon>
    </lineage>
</organism>
<accession>Q4QLV3</accession>
<sequence>MKKIDVKILDSRIGNEFPLPTYATEGSAGLDLRALIDESFEIQPGETKLIPTGLSIYIADPNLAAVILPRSGLGHKHGIVLGNLVGLIDSDYQGPLMVSMWNRGNEPFKIEVGDRIAQLVFVPVVQAEFNIVEDFQQTERGEGGFGHSGKQ</sequence>
<protein>
    <recommendedName>
        <fullName evidence="1">Deoxyuridine 5'-triphosphate nucleotidohydrolase</fullName>
        <shortName evidence="1">dUTPase</shortName>
        <ecNumber evidence="1">3.6.1.23</ecNumber>
    </recommendedName>
    <alternativeName>
        <fullName evidence="1">dUTP pyrophosphatase</fullName>
    </alternativeName>
</protein>
<dbReference type="EC" id="3.6.1.23" evidence="1"/>
<dbReference type="EMBL" id="CP000057">
    <property type="protein sequence ID" value="AAX87994.1"/>
    <property type="molecule type" value="Genomic_DNA"/>
</dbReference>
<dbReference type="RefSeq" id="WP_005631431.1">
    <property type="nucleotide sequence ID" value="NC_007146.2"/>
</dbReference>
<dbReference type="SMR" id="Q4QLV3"/>
<dbReference type="GeneID" id="93219993"/>
<dbReference type="KEGG" id="hit:NTHI1127"/>
<dbReference type="HOGENOM" id="CLU_068508_1_1_6"/>
<dbReference type="UniPathway" id="UPA00610">
    <property type="reaction ID" value="UER00666"/>
</dbReference>
<dbReference type="Proteomes" id="UP000002525">
    <property type="component" value="Chromosome"/>
</dbReference>
<dbReference type="GO" id="GO:0004170">
    <property type="term" value="F:dUTP diphosphatase activity"/>
    <property type="evidence" value="ECO:0007669"/>
    <property type="project" value="UniProtKB-UniRule"/>
</dbReference>
<dbReference type="GO" id="GO:0000287">
    <property type="term" value="F:magnesium ion binding"/>
    <property type="evidence" value="ECO:0007669"/>
    <property type="project" value="UniProtKB-UniRule"/>
</dbReference>
<dbReference type="GO" id="GO:0006226">
    <property type="term" value="P:dUMP biosynthetic process"/>
    <property type="evidence" value="ECO:0007669"/>
    <property type="project" value="UniProtKB-UniRule"/>
</dbReference>
<dbReference type="GO" id="GO:0046081">
    <property type="term" value="P:dUTP catabolic process"/>
    <property type="evidence" value="ECO:0007669"/>
    <property type="project" value="InterPro"/>
</dbReference>
<dbReference type="CDD" id="cd07557">
    <property type="entry name" value="trimeric_dUTPase"/>
    <property type="match status" value="1"/>
</dbReference>
<dbReference type="FunFam" id="2.70.40.10:FF:000002">
    <property type="entry name" value="dUTP diphosphatase"/>
    <property type="match status" value="1"/>
</dbReference>
<dbReference type="Gene3D" id="2.70.40.10">
    <property type="match status" value="1"/>
</dbReference>
<dbReference type="HAMAP" id="MF_00116">
    <property type="entry name" value="dUTPase_bact"/>
    <property type="match status" value="1"/>
</dbReference>
<dbReference type="InterPro" id="IPR008181">
    <property type="entry name" value="dUTPase"/>
</dbReference>
<dbReference type="InterPro" id="IPR029054">
    <property type="entry name" value="dUTPase-like"/>
</dbReference>
<dbReference type="InterPro" id="IPR036157">
    <property type="entry name" value="dUTPase-like_sf"/>
</dbReference>
<dbReference type="InterPro" id="IPR033704">
    <property type="entry name" value="dUTPase_trimeric"/>
</dbReference>
<dbReference type="NCBIfam" id="TIGR00576">
    <property type="entry name" value="dut"/>
    <property type="match status" value="1"/>
</dbReference>
<dbReference type="NCBIfam" id="NF001862">
    <property type="entry name" value="PRK00601.1"/>
    <property type="match status" value="1"/>
</dbReference>
<dbReference type="PANTHER" id="PTHR11241">
    <property type="entry name" value="DEOXYURIDINE 5'-TRIPHOSPHATE NUCLEOTIDOHYDROLASE"/>
    <property type="match status" value="1"/>
</dbReference>
<dbReference type="PANTHER" id="PTHR11241:SF0">
    <property type="entry name" value="DEOXYURIDINE 5'-TRIPHOSPHATE NUCLEOTIDOHYDROLASE"/>
    <property type="match status" value="1"/>
</dbReference>
<dbReference type="Pfam" id="PF00692">
    <property type="entry name" value="dUTPase"/>
    <property type="match status" value="1"/>
</dbReference>
<dbReference type="SUPFAM" id="SSF51283">
    <property type="entry name" value="dUTPase-like"/>
    <property type="match status" value="1"/>
</dbReference>
<reference key="1">
    <citation type="journal article" date="2005" name="J. Bacteriol.">
        <title>Genomic sequence of an otitis media isolate of nontypeable Haemophilus influenzae: comparative study with H. influenzae serotype d, strain KW20.</title>
        <authorList>
            <person name="Harrison A."/>
            <person name="Dyer D.W."/>
            <person name="Gillaspy A."/>
            <person name="Ray W.C."/>
            <person name="Mungur R."/>
            <person name="Carson M.B."/>
            <person name="Zhong H."/>
            <person name="Gipson J."/>
            <person name="Gipson M."/>
            <person name="Johnson L.S."/>
            <person name="Lewis L."/>
            <person name="Bakaletz L.O."/>
            <person name="Munson R.S. Jr."/>
        </authorList>
    </citation>
    <scope>NUCLEOTIDE SEQUENCE [LARGE SCALE GENOMIC DNA]</scope>
    <source>
        <strain>86-028NP</strain>
    </source>
</reference>
<evidence type="ECO:0000255" key="1">
    <source>
        <dbReference type="HAMAP-Rule" id="MF_00116"/>
    </source>
</evidence>
<keyword id="KW-0378">Hydrolase</keyword>
<keyword id="KW-0460">Magnesium</keyword>
<keyword id="KW-0479">Metal-binding</keyword>
<keyword id="KW-0546">Nucleotide metabolism</keyword>
<comment type="function">
    <text evidence="1">This enzyme is involved in nucleotide metabolism: it produces dUMP, the immediate precursor of thymidine nucleotides and it decreases the intracellular concentration of dUTP so that uracil cannot be incorporated into DNA.</text>
</comment>
<comment type="catalytic activity">
    <reaction evidence="1">
        <text>dUTP + H2O = dUMP + diphosphate + H(+)</text>
        <dbReference type="Rhea" id="RHEA:10248"/>
        <dbReference type="ChEBI" id="CHEBI:15377"/>
        <dbReference type="ChEBI" id="CHEBI:15378"/>
        <dbReference type="ChEBI" id="CHEBI:33019"/>
        <dbReference type="ChEBI" id="CHEBI:61555"/>
        <dbReference type="ChEBI" id="CHEBI:246422"/>
        <dbReference type="EC" id="3.6.1.23"/>
    </reaction>
</comment>
<comment type="cofactor">
    <cofactor evidence="1">
        <name>Mg(2+)</name>
        <dbReference type="ChEBI" id="CHEBI:18420"/>
    </cofactor>
</comment>
<comment type="pathway">
    <text evidence="1">Pyrimidine metabolism; dUMP biosynthesis; dUMP from dCTP (dUTP route): step 2/2.</text>
</comment>
<comment type="similarity">
    <text evidence="1">Belongs to the dUTPase family.</text>
</comment>
<feature type="chain" id="PRO_0000231412" description="Deoxyuridine 5'-triphosphate nucleotidohydrolase">
    <location>
        <begin position="1"/>
        <end position="151"/>
    </location>
</feature>
<feature type="binding site" evidence="1">
    <location>
        <begin position="70"/>
        <end position="72"/>
    </location>
    <ligand>
        <name>substrate</name>
    </ligand>
</feature>
<feature type="binding site" evidence="1">
    <location>
        <position position="83"/>
    </location>
    <ligand>
        <name>substrate</name>
    </ligand>
</feature>
<feature type="binding site" evidence="1">
    <location>
        <begin position="87"/>
        <end position="89"/>
    </location>
    <ligand>
        <name>substrate</name>
    </ligand>
</feature>
<feature type="binding site" evidence="1">
    <location>
        <position position="97"/>
    </location>
    <ligand>
        <name>substrate</name>
    </ligand>
</feature>
<proteinExistence type="inferred from homology"/>
<gene>
    <name evidence="1" type="primary">dut</name>
    <name type="ordered locus">NTHI1127</name>
</gene>